<protein>
    <recommendedName>
        <fullName>Pteridine reductase 1</fullName>
        <ecNumber>1.5.1.33</ecNumber>
    </recommendedName>
    <alternativeName>
        <fullName>H region methotrexate resistance protein</fullName>
    </alternativeName>
</protein>
<feature type="chain" id="PRO_0000054754" description="Pteridine reductase 1">
    <location>
        <begin position="1"/>
        <end position="289"/>
    </location>
</feature>
<feature type="active site" description="Proton acceptor" evidence="2">
    <location>
        <position position="195"/>
    </location>
</feature>
<feature type="binding site" evidence="3">
    <location>
        <begin position="14"/>
        <end position="41"/>
    </location>
    <ligand>
        <name>NADP(+)</name>
        <dbReference type="ChEBI" id="CHEBI:58349"/>
    </ligand>
</feature>
<feature type="binding site" evidence="1">
    <location>
        <position position="176"/>
    </location>
    <ligand>
        <name>substrate</name>
    </ligand>
</feature>
<feature type="binding site" evidence="3">
    <location>
        <begin position="195"/>
        <end position="199"/>
    </location>
    <ligand>
        <name>NADP(+)</name>
        <dbReference type="ChEBI" id="CHEBI:58349"/>
    </ligand>
</feature>
<feature type="strand" evidence="6">
    <location>
        <begin position="9"/>
        <end position="12"/>
    </location>
</feature>
<feature type="turn" evidence="6">
    <location>
        <begin position="13"/>
        <end position="16"/>
    </location>
</feature>
<feature type="helix" evidence="6">
    <location>
        <begin position="18"/>
        <end position="29"/>
    </location>
</feature>
<feature type="strand" evidence="6">
    <location>
        <begin position="33"/>
        <end position="40"/>
    </location>
</feature>
<feature type="helix" evidence="6">
    <location>
        <begin position="42"/>
        <end position="55"/>
    </location>
</feature>
<feature type="strand" evidence="6">
    <location>
        <begin position="60"/>
        <end position="64"/>
    </location>
</feature>
<feature type="strand" evidence="6">
    <location>
        <begin position="68"/>
        <end position="70"/>
    </location>
</feature>
<feature type="helix" evidence="6">
    <location>
        <begin position="86"/>
        <end position="101"/>
    </location>
</feature>
<feature type="strand" evidence="6">
    <location>
        <begin position="106"/>
        <end position="109"/>
    </location>
</feature>
<feature type="helix" evidence="6">
    <location>
        <begin position="136"/>
        <end position="148"/>
    </location>
</feature>
<feature type="helix" evidence="6">
    <location>
        <begin position="150"/>
        <end position="164"/>
    </location>
</feature>
<feature type="helix" evidence="6">
    <location>
        <begin position="168"/>
        <end position="170"/>
    </location>
</feature>
<feature type="strand" evidence="6">
    <location>
        <begin position="176"/>
        <end position="180"/>
    </location>
</feature>
<feature type="strand" evidence="6">
    <location>
        <begin position="185"/>
        <end position="187"/>
    </location>
</feature>
<feature type="helix" evidence="6">
    <location>
        <begin position="193"/>
        <end position="213"/>
    </location>
</feature>
<feature type="turn" evidence="6">
    <location>
        <begin position="214"/>
        <end position="217"/>
    </location>
</feature>
<feature type="strand" evidence="6">
    <location>
        <begin position="219"/>
        <end position="229"/>
    </location>
</feature>
<feature type="helix" evidence="6">
    <location>
        <begin position="236"/>
        <end position="243"/>
    </location>
</feature>
<feature type="turn" evidence="6">
    <location>
        <begin position="247"/>
        <end position="250"/>
    </location>
</feature>
<feature type="helix" evidence="6">
    <location>
        <begin position="255"/>
        <end position="266"/>
    </location>
</feature>
<feature type="helix" evidence="6">
    <location>
        <begin position="268"/>
        <end position="270"/>
    </location>
</feature>
<feature type="strand" evidence="6">
    <location>
        <begin position="277"/>
        <end position="281"/>
    </location>
</feature>
<feature type="helix" evidence="6">
    <location>
        <begin position="284"/>
        <end position="286"/>
    </location>
</feature>
<comment type="function">
    <text evidence="4">Exhibits a NADPH-dependent biopterin reductase activity. Has good activity with folate and significant activity with dihydrofolate and dihydrobiopterin, but not with quinonoid dihydrobiopterin. Confers resistance to methotrexate (MTX).</text>
</comment>
<comment type="catalytic activity">
    <reaction>
        <text>(6R)-L-erythro-5,6,7,8-tetrahydrobiopterin + 2 NADP(+) = L-erythro-biopterin + 2 NADPH + 2 H(+)</text>
        <dbReference type="Rhea" id="RHEA:19509"/>
        <dbReference type="ChEBI" id="CHEBI:15378"/>
        <dbReference type="ChEBI" id="CHEBI:57783"/>
        <dbReference type="ChEBI" id="CHEBI:58349"/>
        <dbReference type="ChEBI" id="CHEBI:59560"/>
        <dbReference type="ChEBI" id="CHEBI:63931"/>
        <dbReference type="EC" id="1.5.1.33"/>
    </reaction>
</comment>
<comment type="pathway">
    <text>Cofactor biosynthesis; tetrahydrobiopterin biosynthesis; tetrahydrobiopterin from biopterin: step 1/1.</text>
</comment>
<comment type="subunit">
    <text evidence="1">Homotetramer.</text>
</comment>
<comment type="similarity">
    <text evidence="5">Belongs to the short-chain dehydrogenases/reductases (SDR) family.</text>
</comment>
<reference key="1">
    <citation type="journal article" date="1992" name="EMBO J.">
        <title>A novel antifolate resistance gene on the amplified H circle of Leishmania.</title>
        <authorList>
            <person name="Papadopoulou B."/>
            <person name="Roy G."/>
            <person name="Ouellette M."/>
        </authorList>
    </citation>
    <scope>NUCLEOTIDE SEQUENCE [GENOMIC DNA]</scope>
    <source>
        <strain>TarII</strain>
    </source>
</reference>
<reference key="2">
    <citation type="journal article" date="1994" name="Proc. Natl. Acad. Sci. U.S.A.">
        <title>PTR1: a reductase mediating salvage of oxidized pteridines and methotrexate resistance in the protozoan parasite Leishmania major.</title>
        <authorList>
            <person name="Bello A.R."/>
            <person name="Nare B."/>
            <person name="Freedman D."/>
            <person name="Hardy L.W."/>
            <person name="Beverley S.M."/>
        </authorList>
    </citation>
    <scope>FUNCTION</scope>
</reference>
<reference key="3">
    <citation type="journal article" date="2003" name="Acta Crystallogr. D">
        <title>Structure of pteridine reductase (PTR1) from Leishmania tarentolae.</title>
        <authorList>
            <person name="Zhao H."/>
            <person name="Bray T."/>
            <person name="Ouellette M."/>
            <person name="Zhao M."/>
            <person name="Ferre R.A."/>
            <person name="Matthews D."/>
            <person name="Whiteley J.M."/>
            <person name="Varughese K.I."/>
        </authorList>
    </citation>
    <scope>X-RAY CRYSTALLOGRAPHY (2.86 ANGSTROMS) IN COMPLEX WITH NADP</scope>
</reference>
<proteinExistence type="evidence at protein level"/>
<gene>
    <name type="primary">PTR1</name>
    <name type="synonym">LTDH</name>
</gene>
<accession>P42556</accession>
<sequence length="289" mass="30744">MTTSPTAPVALVTGAAKRLGSSIAEALHAEGYTVCLHYHRSAADASTLAATLNARRPNSAITVQADLSNVATASFSETDGSVPVTLFSRCSALVDACYMHWGRCDVLVNNASSFYPTPLLRKDAGEGGSSVGDKESLEVAAADLFGSNAIAPYFLIKAFAQRVADTRAEQRGTSYSIVNMVDAMTSQPLLGYTMYTMAKEALEGLTRSAALELASLQIRVNGVSPGLSVLPDDMPFSVQEDYRRKVPLYQRNSSAEEVSDVVIFLCSPKAKYITGTCIKVDGGYSLTRA</sequence>
<keyword id="KW-0002">3D-structure</keyword>
<keyword id="KW-0487">Methotrexate resistance</keyword>
<keyword id="KW-0521">NADP</keyword>
<keyword id="KW-0560">Oxidoreductase</keyword>
<organism>
    <name type="scientific">Leishmania tarentolae</name>
    <name type="common">Sauroleishmania tarentolae</name>
    <dbReference type="NCBI Taxonomy" id="5689"/>
    <lineage>
        <taxon>Eukaryota</taxon>
        <taxon>Discoba</taxon>
        <taxon>Euglenozoa</taxon>
        <taxon>Kinetoplastea</taxon>
        <taxon>Metakinetoplastina</taxon>
        <taxon>Trypanosomatida</taxon>
        <taxon>Trypanosomatidae</taxon>
        <taxon>Leishmaniinae</taxon>
        <taxon>Leishmania</taxon>
        <taxon>lizard Leishmania</taxon>
    </lineage>
</organism>
<evidence type="ECO:0000250" key="1"/>
<evidence type="ECO:0000255" key="2">
    <source>
        <dbReference type="PROSITE-ProRule" id="PRU10001"/>
    </source>
</evidence>
<evidence type="ECO:0000269" key="3">
    <source>
    </source>
</evidence>
<evidence type="ECO:0000269" key="4">
    <source>
    </source>
</evidence>
<evidence type="ECO:0000305" key="5"/>
<evidence type="ECO:0007829" key="6">
    <source>
        <dbReference type="PDB" id="1P33"/>
    </source>
</evidence>
<dbReference type="EC" id="1.5.1.33"/>
<dbReference type="EMBL" id="Z11978">
    <property type="protein sequence ID" value="CAA78031.1"/>
    <property type="molecule type" value="Genomic_DNA"/>
</dbReference>
<dbReference type="PIR" id="S25286">
    <property type="entry name" value="S25286"/>
</dbReference>
<dbReference type="PDB" id="1P33">
    <property type="method" value="X-ray"/>
    <property type="resolution" value="2.86 A"/>
    <property type="chains" value="A/B/C/D=1-289"/>
</dbReference>
<dbReference type="PDBsum" id="1P33"/>
<dbReference type="SMR" id="P42556"/>
<dbReference type="VEuPathDB" id="TriTrypDB:LtaPh_2303300"/>
<dbReference type="OrthoDB" id="1669814at2759"/>
<dbReference type="PhylomeDB" id="P42556"/>
<dbReference type="BRENDA" id="1.5.1.33">
    <property type="organism ID" value="2956"/>
</dbReference>
<dbReference type="SABIO-RK" id="P42556"/>
<dbReference type="UniPathway" id="UPA00849">
    <property type="reaction ID" value="UER00822"/>
</dbReference>
<dbReference type="EvolutionaryTrace" id="P42556"/>
<dbReference type="GO" id="GO:0047040">
    <property type="term" value="F:pteridine reductase activity"/>
    <property type="evidence" value="ECO:0007669"/>
    <property type="project" value="UniProtKB-EC"/>
</dbReference>
<dbReference type="GO" id="GO:0031427">
    <property type="term" value="P:response to methotrexate"/>
    <property type="evidence" value="ECO:0007669"/>
    <property type="project" value="UniProtKB-KW"/>
</dbReference>
<dbReference type="GO" id="GO:0006729">
    <property type="term" value="P:tetrahydrobiopterin biosynthetic process"/>
    <property type="evidence" value="ECO:0007669"/>
    <property type="project" value="UniProtKB-UniPathway"/>
</dbReference>
<dbReference type="CDD" id="cd05357">
    <property type="entry name" value="PR_SDR_c"/>
    <property type="match status" value="1"/>
</dbReference>
<dbReference type="Gene3D" id="3.40.50.720">
    <property type="entry name" value="NAD(P)-binding Rossmann-like Domain"/>
    <property type="match status" value="1"/>
</dbReference>
<dbReference type="InterPro" id="IPR036291">
    <property type="entry name" value="NAD(P)-bd_dom_sf"/>
</dbReference>
<dbReference type="InterPro" id="IPR014058">
    <property type="entry name" value="Pteridine_reductase"/>
</dbReference>
<dbReference type="InterPro" id="IPR020904">
    <property type="entry name" value="Sc_DH/Rdtase_CS"/>
</dbReference>
<dbReference type="InterPro" id="IPR002347">
    <property type="entry name" value="SDR_fam"/>
</dbReference>
<dbReference type="NCBIfam" id="TIGR02685">
    <property type="entry name" value="pter_reduc_Leis"/>
    <property type="match status" value="1"/>
</dbReference>
<dbReference type="PANTHER" id="PTHR43639">
    <property type="entry name" value="OXIDOREDUCTASE, SHORT-CHAIN DEHYDROGENASE/REDUCTASE FAMILY (AFU_ORTHOLOGUE AFUA_5G02870)"/>
    <property type="match status" value="1"/>
</dbReference>
<dbReference type="PANTHER" id="PTHR43639:SF1">
    <property type="entry name" value="SHORT-CHAIN DEHYDROGENASE_REDUCTASE FAMILY PROTEIN"/>
    <property type="match status" value="1"/>
</dbReference>
<dbReference type="Pfam" id="PF13561">
    <property type="entry name" value="adh_short_C2"/>
    <property type="match status" value="1"/>
</dbReference>
<dbReference type="PRINTS" id="PR00081">
    <property type="entry name" value="GDHRDH"/>
</dbReference>
<dbReference type="PRINTS" id="PR00080">
    <property type="entry name" value="SDRFAMILY"/>
</dbReference>
<dbReference type="SUPFAM" id="SSF51735">
    <property type="entry name" value="NAD(P)-binding Rossmann-fold domains"/>
    <property type="match status" value="1"/>
</dbReference>
<dbReference type="PROSITE" id="PS00061">
    <property type="entry name" value="ADH_SHORT"/>
    <property type="match status" value="1"/>
</dbReference>
<name>PTR1_LEITA</name>